<name>FRA1B_FRAAN</name>
<evidence type="ECO:0000250" key="1">
    <source>
        <dbReference type="UniProtKB" id="Q256S2"/>
    </source>
</evidence>
<evidence type="ECO:0000250" key="2">
    <source>
        <dbReference type="UniProtKB" id="Q5ULZ4"/>
    </source>
</evidence>
<evidence type="ECO:0000303" key="3">
    <source>
    </source>
</evidence>
<evidence type="ECO:0000305" key="4"/>
<keyword id="KW-0020">Allergen</keyword>
<keyword id="KW-0568">Pathogenesis-related protein</keyword>
<keyword id="KW-0611">Plant defense</keyword>
<accession>Q256S7</accession>
<gene>
    <name evidence="3" type="primary">FRAA1B.1</name>
    <name evidence="3" type="synonym">FRAA1B.2</name>
</gene>
<feature type="chain" id="PRO_0000447021" description="Major strawberry allergen Fra a 1-B">
    <location>
        <begin position="1"/>
        <end position="160"/>
    </location>
</feature>
<dbReference type="EMBL" id="AM236313">
    <property type="protein sequence ID" value="CAJ85639.1"/>
    <property type="molecule type" value="Genomic_DNA"/>
</dbReference>
<dbReference type="EMBL" id="AM236314">
    <property type="protein sequence ID" value="CAJ85640.1"/>
    <property type="molecule type" value="Genomic_DNA"/>
</dbReference>
<dbReference type="EMBL" id="AM236315">
    <property type="protein sequence ID" value="CAJ85641.1"/>
    <property type="molecule type" value="Genomic_DNA"/>
</dbReference>
<dbReference type="SMR" id="Q256S7"/>
<dbReference type="Allergome" id="2124">
    <property type="allergen name" value="Fra a 1"/>
</dbReference>
<dbReference type="GO" id="GO:0005737">
    <property type="term" value="C:cytoplasm"/>
    <property type="evidence" value="ECO:0007669"/>
    <property type="project" value="TreeGrafter"/>
</dbReference>
<dbReference type="GO" id="GO:0005634">
    <property type="term" value="C:nucleus"/>
    <property type="evidence" value="ECO:0007669"/>
    <property type="project" value="TreeGrafter"/>
</dbReference>
<dbReference type="GO" id="GO:0010427">
    <property type="term" value="F:abscisic acid binding"/>
    <property type="evidence" value="ECO:0007669"/>
    <property type="project" value="InterPro"/>
</dbReference>
<dbReference type="GO" id="GO:0004864">
    <property type="term" value="F:protein phosphatase inhibitor activity"/>
    <property type="evidence" value="ECO:0007669"/>
    <property type="project" value="InterPro"/>
</dbReference>
<dbReference type="GO" id="GO:0038023">
    <property type="term" value="F:signaling receptor activity"/>
    <property type="evidence" value="ECO:0007669"/>
    <property type="project" value="InterPro"/>
</dbReference>
<dbReference type="GO" id="GO:0009738">
    <property type="term" value="P:abscisic acid-activated signaling pathway"/>
    <property type="evidence" value="ECO:0007669"/>
    <property type="project" value="InterPro"/>
</dbReference>
<dbReference type="GO" id="GO:0006952">
    <property type="term" value="P:defense response"/>
    <property type="evidence" value="ECO:0007669"/>
    <property type="project" value="UniProtKB-KW"/>
</dbReference>
<dbReference type="CDD" id="cd07816">
    <property type="entry name" value="Bet_v1-like"/>
    <property type="match status" value="1"/>
</dbReference>
<dbReference type="FunFam" id="3.30.530.20:FF:000007">
    <property type="entry name" value="Major pollen allergen Bet v 1-A"/>
    <property type="match status" value="1"/>
</dbReference>
<dbReference type="Gene3D" id="3.30.530.20">
    <property type="match status" value="1"/>
</dbReference>
<dbReference type="InterPro" id="IPR000916">
    <property type="entry name" value="Bet_v_I/MLP"/>
</dbReference>
<dbReference type="InterPro" id="IPR024949">
    <property type="entry name" value="Bet_v_I_allergen"/>
</dbReference>
<dbReference type="InterPro" id="IPR050279">
    <property type="entry name" value="Plant_def-hormone_signal"/>
</dbReference>
<dbReference type="InterPro" id="IPR023393">
    <property type="entry name" value="START-like_dom_sf"/>
</dbReference>
<dbReference type="PANTHER" id="PTHR31213">
    <property type="entry name" value="OS08G0374000 PROTEIN-RELATED"/>
    <property type="match status" value="1"/>
</dbReference>
<dbReference type="PANTHER" id="PTHR31213:SF55">
    <property type="entry name" value="STRESS-INDUCED PROTEIN SAM22"/>
    <property type="match status" value="1"/>
</dbReference>
<dbReference type="Pfam" id="PF00407">
    <property type="entry name" value="Bet_v_1"/>
    <property type="match status" value="1"/>
</dbReference>
<dbReference type="PRINTS" id="PR00634">
    <property type="entry name" value="BETALLERGEN"/>
</dbReference>
<dbReference type="SMART" id="SM01037">
    <property type="entry name" value="Bet_v_1"/>
    <property type="match status" value="1"/>
</dbReference>
<dbReference type="SUPFAM" id="SSF55961">
    <property type="entry name" value="Bet v1-like"/>
    <property type="match status" value="1"/>
</dbReference>
<protein>
    <recommendedName>
        <fullName evidence="3">Major strawberry allergen Fra a 1-B</fullName>
    </recommendedName>
    <alternativeName>
        <fullName evidence="4">Fra a 1.01B</fullName>
    </alternativeName>
    <allergenName evidence="4">Fra a 1</allergenName>
</protein>
<comment type="subunit">
    <text evidence="1">Monomer.</text>
</comment>
<comment type="allergen">
    <text evidence="2">May cause an allergic reaction in human (By similarity). Binds to IgE of patients allergic to strawberry (By similarity).</text>
</comment>
<comment type="similarity">
    <text evidence="4">Belongs to the BetVI family.</text>
</comment>
<reference key="1">
    <citation type="journal article" date="2007" name="Mol. Immunol.">
        <title>Cloning and sequencing of the Bet v 1-homologous allergen Fra a 1 in strawberry (Fragaria ananassa) shows the presence of an intron and little variability in amino acid sequence.</title>
        <authorList>
            <person name="Musidlowska-Persson A."/>
            <person name="Alm R."/>
            <person name="Emanuelsson C."/>
        </authorList>
    </citation>
    <scope>NUCLEOTIDE SEQUENCE [GENOMIC DNA]</scope>
    <source>
        <tissue>Leaf</tissue>
    </source>
</reference>
<proteinExistence type="inferred from homology"/>
<sequence length="160" mass="17812">MGVYTYENEFTSDIPAPKLFKAFVLDADNLIPKIAPQAIKCAEILEGDGGPGTIKKITFGEGSHYGYVKHKIHSIDKENHTYSYSLIEGDALSDNIEKIDYETKLVSAPHGGTIIKTTSKYHTKGDVEIKEEHVKAGKEKASHLFKLIEGYLKDHPSEYN</sequence>
<organism>
    <name type="scientific">Fragaria ananassa</name>
    <name type="common">Strawberry</name>
    <name type="synonym">Fragaria chiloensis x Fragaria virginiana</name>
    <dbReference type="NCBI Taxonomy" id="3747"/>
    <lineage>
        <taxon>Eukaryota</taxon>
        <taxon>Viridiplantae</taxon>
        <taxon>Streptophyta</taxon>
        <taxon>Embryophyta</taxon>
        <taxon>Tracheophyta</taxon>
        <taxon>Spermatophyta</taxon>
        <taxon>Magnoliopsida</taxon>
        <taxon>eudicotyledons</taxon>
        <taxon>Gunneridae</taxon>
        <taxon>Pentapetalae</taxon>
        <taxon>rosids</taxon>
        <taxon>fabids</taxon>
        <taxon>Rosales</taxon>
        <taxon>Rosaceae</taxon>
        <taxon>Rosoideae</taxon>
        <taxon>Potentilleae</taxon>
        <taxon>Fragariinae</taxon>
        <taxon>Fragaria</taxon>
    </lineage>
</organism>